<name>GBB1_PONAB</name>
<gene>
    <name type="primary">GNB1</name>
</gene>
<organism>
    <name type="scientific">Pongo abelii</name>
    <name type="common">Sumatran orangutan</name>
    <name type="synonym">Pongo pygmaeus abelii</name>
    <dbReference type="NCBI Taxonomy" id="9601"/>
    <lineage>
        <taxon>Eukaryota</taxon>
        <taxon>Metazoa</taxon>
        <taxon>Chordata</taxon>
        <taxon>Craniata</taxon>
        <taxon>Vertebrata</taxon>
        <taxon>Euteleostomi</taxon>
        <taxon>Mammalia</taxon>
        <taxon>Eutheria</taxon>
        <taxon>Euarchontoglires</taxon>
        <taxon>Primates</taxon>
        <taxon>Haplorrhini</taxon>
        <taxon>Catarrhini</taxon>
        <taxon>Hominidae</taxon>
        <taxon>Pongo</taxon>
    </lineage>
</organism>
<sequence>MSELDQLRQEAEQLKNQIRDARKACADATLSQITNNIDPVGRIQMRTRRTLRGHLAKIYAMHWGTDSRLLVSASQDGKLIIWDSYTTNKVHAIPLRSSWVMTCAYAPSGNYVACGGLDNICSIYNLKTREGNVRVSRELAGHTGYLSCCRFLDDNQIVTSSGDTTCALWDIETGQQTTTFTGHTGDVMSLSLAPDTRLFVSGACDASAKLWDVREGMCRQTFTGHESDINAICFFPNGNAFATGSDDATCRLFDLRADQELMTYSHDNIICGITSVSFSKSGRLLLAGYDDFNCNVWDALKADRAGVLAGHDDRVSCLGVTDDGMAVATGSWDSFLKIWN</sequence>
<reference key="1">
    <citation type="submission" date="2004-11" db="EMBL/GenBank/DDBJ databases">
        <authorList>
            <consortium name="The German cDNA consortium"/>
        </authorList>
    </citation>
    <scope>NUCLEOTIDE SEQUENCE [LARGE SCALE MRNA]</scope>
    <source>
        <tissue>Brain cortex</tissue>
    </source>
</reference>
<keyword id="KW-0007">Acetylation</keyword>
<keyword id="KW-0597">Phosphoprotein</keyword>
<keyword id="KW-1185">Reference proteome</keyword>
<keyword id="KW-0677">Repeat</keyword>
<keyword id="KW-0807">Transducer</keyword>
<keyword id="KW-0853">WD repeat</keyword>
<accession>Q5R5W8</accession>
<comment type="function">
    <text>Guanine nucleotide-binding proteins (G proteins) are involved as a modulator or transducer in various transmembrane signaling systems. The beta and gamma chains are required for the GTPase activity, for replacement of GDP by GTP, and for G protein-effector interaction.</text>
</comment>
<comment type="subunit">
    <text evidence="2 3">G proteins are composed of 3 units, alpha, beta and gamma (By similarity). The heterodimer formed by GNB1 and GNG2 interacts with ARHGEF5 (By similarity). The heterodimer formed by GNB1 and GNG2 interacts with GRK2 (By similarity). Forms a complex with GNAO1 and GNG3. Interacts with ARHGEF18 and RASD2 (By similarity). Forms complexes with TAS2R14 and G-proteins; these complexes play a role in the perception of bitterness (By similarity). Component of the TAS2R14-GNAI1 complex, consisting of TAS2R14, GNAI1, GNB1 and GNG2 (By similarity). Component of the TAS2R14-GNAT3 complex, consisting of TAS2R14, GNAT3, GNB1 and GNG2 (By similarity). Component of the TAS2R14-GNAS2 complex, consisting of TAS2R14, GNAS2, GNB1 and GNG2 (By similarity).</text>
</comment>
<comment type="PTM">
    <text evidence="1">Phosphorylation at His-266 by NDKB contributes to G protein activation by increasing the high energetic phosphate transfer onto GDP.</text>
</comment>
<comment type="similarity">
    <text evidence="4">Belongs to the WD repeat G protein beta family.</text>
</comment>
<dbReference type="EMBL" id="CR860734">
    <property type="protein sequence ID" value="CAH92848.1"/>
    <property type="molecule type" value="mRNA"/>
</dbReference>
<dbReference type="RefSeq" id="NP_001126664.1">
    <property type="nucleotide sequence ID" value="NM_001133192.1"/>
</dbReference>
<dbReference type="SMR" id="Q5R5W8"/>
<dbReference type="STRING" id="9601.ENSPPYP00000002307"/>
<dbReference type="GeneID" id="100173664"/>
<dbReference type="KEGG" id="pon:100173664"/>
<dbReference type="CTD" id="2782"/>
<dbReference type="eggNOG" id="KOG0286">
    <property type="taxonomic scope" value="Eukaryota"/>
</dbReference>
<dbReference type="InParanoid" id="Q5R5W8"/>
<dbReference type="OrthoDB" id="10255630at2759"/>
<dbReference type="Proteomes" id="UP000001595">
    <property type="component" value="Unplaced"/>
</dbReference>
<dbReference type="GO" id="GO:0007165">
    <property type="term" value="P:signal transduction"/>
    <property type="evidence" value="ECO:0007669"/>
    <property type="project" value="UniProtKB-KW"/>
</dbReference>
<dbReference type="CDD" id="cd00200">
    <property type="entry name" value="WD40"/>
    <property type="match status" value="1"/>
</dbReference>
<dbReference type="FunFam" id="2.130.10.10:FF:000007">
    <property type="entry name" value="Guanine nucleotide-binding protein G(I)/G(S)/G(T) subunit beta-1"/>
    <property type="match status" value="1"/>
</dbReference>
<dbReference type="Gene3D" id="2.130.10.10">
    <property type="entry name" value="YVTN repeat-like/Quinoprotein amine dehydrogenase"/>
    <property type="match status" value="1"/>
</dbReference>
<dbReference type="InterPro" id="IPR020472">
    <property type="entry name" value="G-protein_beta_WD-40_rep"/>
</dbReference>
<dbReference type="InterPro" id="IPR001632">
    <property type="entry name" value="Gprotein_B"/>
</dbReference>
<dbReference type="InterPro" id="IPR016346">
    <property type="entry name" value="Guanine_nucleotide-bd_bsu"/>
</dbReference>
<dbReference type="InterPro" id="IPR015943">
    <property type="entry name" value="WD40/YVTN_repeat-like_dom_sf"/>
</dbReference>
<dbReference type="InterPro" id="IPR019775">
    <property type="entry name" value="WD40_repeat_CS"/>
</dbReference>
<dbReference type="InterPro" id="IPR036322">
    <property type="entry name" value="WD40_repeat_dom_sf"/>
</dbReference>
<dbReference type="InterPro" id="IPR001680">
    <property type="entry name" value="WD40_rpt"/>
</dbReference>
<dbReference type="PANTHER" id="PTHR19850">
    <property type="entry name" value="GUANINE NUCLEOTIDE-BINDING PROTEIN BETA G PROTEIN BETA"/>
    <property type="match status" value="1"/>
</dbReference>
<dbReference type="Pfam" id="PF25391">
    <property type="entry name" value="WD40_Gbeta"/>
    <property type="match status" value="1"/>
</dbReference>
<dbReference type="PIRSF" id="PIRSF002394">
    <property type="entry name" value="GN-bd_beta"/>
    <property type="match status" value="1"/>
</dbReference>
<dbReference type="PRINTS" id="PR00319">
    <property type="entry name" value="GPROTEINB"/>
</dbReference>
<dbReference type="PRINTS" id="PR00320">
    <property type="entry name" value="GPROTEINBRPT"/>
</dbReference>
<dbReference type="SMART" id="SM00320">
    <property type="entry name" value="WD40"/>
    <property type="match status" value="7"/>
</dbReference>
<dbReference type="SUPFAM" id="SSF50978">
    <property type="entry name" value="WD40 repeat-like"/>
    <property type="match status" value="1"/>
</dbReference>
<dbReference type="PROSITE" id="PS00678">
    <property type="entry name" value="WD_REPEATS_1"/>
    <property type="match status" value="3"/>
</dbReference>
<dbReference type="PROSITE" id="PS50082">
    <property type="entry name" value="WD_REPEATS_2"/>
    <property type="match status" value="6"/>
</dbReference>
<dbReference type="PROSITE" id="PS50294">
    <property type="entry name" value="WD_REPEATS_REGION"/>
    <property type="match status" value="1"/>
</dbReference>
<proteinExistence type="evidence at transcript level"/>
<evidence type="ECO:0000250" key="1"/>
<evidence type="ECO:0000250" key="2">
    <source>
        <dbReference type="UniProtKB" id="P62871"/>
    </source>
</evidence>
<evidence type="ECO:0000250" key="3">
    <source>
        <dbReference type="UniProtKB" id="P62873"/>
    </source>
</evidence>
<evidence type="ECO:0000305" key="4"/>
<protein>
    <recommendedName>
        <fullName>Guanine nucleotide-binding protein G(I)/G(S)/G(T) subunit beta-1</fullName>
    </recommendedName>
    <alternativeName>
        <fullName>Transducin beta chain 1</fullName>
    </alternativeName>
</protein>
<feature type="initiator methionine" description="Removed" evidence="3">
    <location>
        <position position="1"/>
    </location>
</feature>
<feature type="chain" id="PRO_0000127689" description="Guanine nucleotide-binding protein G(I)/G(S)/G(T) subunit beta-1">
    <location>
        <begin position="2"/>
        <end position="340"/>
    </location>
</feature>
<feature type="repeat" description="WD 1" evidence="3">
    <location>
        <begin position="46"/>
        <end position="94"/>
    </location>
</feature>
<feature type="repeat" description="WD 2" evidence="3">
    <location>
        <begin position="95"/>
        <end position="140"/>
    </location>
</feature>
<feature type="repeat" description="WD 3" evidence="3">
    <location>
        <begin position="141"/>
        <end position="181"/>
    </location>
</feature>
<feature type="repeat" description="WD 4" evidence="3">
    <location>
        <begin position="182"/>
        <end position="223"/>
    </location>
</feature>
<feature type="repeat" description="WD 5" evidence="3">
    <location>
        <begin position="224"/>
        <end position="267"/>
    </location>
</feature>
<feature type="repeat" description="WD 6" evidence="3">
    <location>
        <begin position="268"/>
        <end position="309"/>
    </location>
</feature>
<feature type="repeat" description="WD 7" evidence="3">
    <location>
        <begin position="310"/>
        <end position="340"/>
    </location>
</feature>
<feature type="modified residue" description="N-acetylserine" evidence="3">
    <location>
        <position position="2"/>
    </location>
</feature>
<feature type="modified residue" description="Phosphoserine" evidence="3">
    <location>
        <position position="2"/>
    </location>
</feature>
<feature type="modified residue" description="Phosphohistidine" evidence="2">
    <location>
        <position position="266"/>
    </location>
</feature>